<protein>
    <recommendedName>
        <fullName evidence="3">RNA-directed RNA polymerase</fullName>
        <shortName>RdRp</shortName>
        <ecNumber evidence="3">2.7.7.48</ecNumber>
    </recommendedName>
    <alternativeName>
        <fullName>RNA replicase</fullName>
        <shortName>Protein A</shortName>
    </alternativeName>
</protein>
<accession>Q9IMM4</accession>
<keyword id="KW-0024">Alternative initiation</keyword>
<keyword id="KW-0903">Direct protein sequencing</keyword>
<keyword id="KW-1043">Host membrane</keyword>
<keyword id="KW-1045">Host mitochondrion</keyword>
<keyword id="KW-1047">Host mitochondrion outer membrane</keyword>
<keyword id="KW-0472">Membrane</keyword>
<keyword id="KW-0547">Nucleotide-binding</keyword>
<keyword id="KW-0548">Nucleotidyltransferase</keyword>
<keyword id="KW-1185">Reference proteome</keyword>
<keyword id="KW-0696">RNA-directed RNA polymerase</keyword>
<keyword id="KW-0808">Transferase</keyword>
<keyword id="KW-0812">Transmembrane</keyword>
<keyword id="KW-1133">Transmembrane helix</keyword>
<keyword id="KW-0693">Viral RNA replication</keyword>
<reference key="1">
    <citation type="journal article" date="2001" name="J. Gen. Virol.">
        <title>Comparisons among the larger genome segments of six nodaviruses and their encoded RNA replicases.</title>
        <authorList>
            <person name="Johnson K.N."/>
            <person name="Johnson K.L."/>
            <person name="Dasgupta R."/>
            <person name="Gratsch T."/>
            <person name="Ball L.A."/>
        </authorList>
    </citation>
    <scope>NUCLEOTIDE SEQUENCE [GENOMIC RNA]</scope>
</reference>
<reference key="2">
    <citation type="journal article" date="2003" name="Virology">
        <title>Recovery of infectivity from cDNA clones of nodamura virus and identification of small nonstructural proteins.</title>
        <authorList>
            <person name="Johnson K.L."/>
            <person name="Price B.D."/>
            <person name="Ball L.A."/>
        </authorList>
    </citation>
    <scope>PROTEIN SEQUENCE OF 917-942; 947-955; 960-978 AND 994-1001</scope>
    <scope>ALTERNATIVE INITIATION</scope>
</reference>
<reference key="3">
    <citation type="journal article" date="2014" name="J. Virol.">
        <title>Two membrane-associated regions within the Nodamura virus RNA-dependent RNA polymerase are critical for both mitochondrial localization and RNA replication.</title>
        <authorList>
            <person name="Gant V.U. Jr."/>
            <person name="Moreno S."/>
            <person name="Varela-Ramirez A."/>
            <person name="Johnson K.L."/>
        </authorList>
    </citation>
    <scope>SUBCELLULAR LOCATION</scope>
</reference>
<evidence type="ECO:0000250" key="1">
    <source>
        <dbReference type="UniProtKB" id="Q66929"/>
    </source>
</evidence>
<evidence type="ECO:0000255" key="2"/>
<evidence type="ECO:0000255" key="3">
    <source>
        <dbReference type="PROSITE-ProRule" id="PRU00539"/>
    </source>
</evidence>
<evidence type="ECO:0000256" key="4">
    <source>
        <dbReference type="SAM" id="MobiDB-lite"/>
    </source>
</evidence>
<evidence type="ECO:0000305" key="5"/>
<comment type="function">
    <text evidence="1">RNA-dependent RNA polymerase, which replicates the viral genome composed of 2 RNA segments, RNA1 and RNA2. Does not need an exogenous primer. Also possesses a terminal nucleotidyl transferase (TNTase) activity. The TNTase catalyzes the addition of nucleotide to the 3'-end of plus- and minus-stranded RNAs, probably to repair the 3'-end nucleotide loss. Forms the open necked connection to the cytosol of the virus-induced replication vesicles. Mediates viral RNA1 recruitment.</text>
</comment>
<comment type="catalytic activity">
    <reaction evidence="3">
        <text>RNA(n) + a ribonucleoside 5'-triphosphate = RNA(n+1) + diphosphate</text>
        <dbReference type="Rhea" id="RHEA:21248"/>
        <dbReference type="Rhea" id="RHEA-COMP:14527"/>
        <dbReference type="Rhea" id="RHEA-COMP:17342"/>
        <dbReference type="ChEBI" id="CHEBI:33019"/>
        <dbReference type="ChEBI" id="CHEBI:61557"/>
        <dbReference type="ChEBI" id="CHEBI:140395"/>
        <dbReference type="EC" id="2.7.7.48"/>
    </reaction>
    <physiologicalReaction direction="left-to-right" evidence="1">
        <dbReference type="Rhea" id="RHEA:21249"/>
    </physiologicalReaction>
</comment>
<comment type="cofactor">
    <cofactor evidence="1">
        <name>Mn(2+)</name>
        <dbReference type="ChEBI" id="CHEBI:29035"/>
    </cofactor>
    <text evidence="1">For RdRP activity.</text>
</comment>
<comment type="subunit">
    <text evidence="1">Homododecamer. Forms 2 stacked rings of 35-nm in diameter, arranged in a crown-like structure at the opening of virus-induced replication vesicles. Interacts with protein B2.</text>
</comment>
<comment type="subcellular location">
    <subcellularLocation>
        <location evidence="1">Host mitochondrion outer membrane</location>
        <topology evidence="1">Single-pass membrane protein</topology>
    </subcellularLocation>
    <text evidence="1">Part of the 30- to 90-nm invaginations of the host mitochondrial outer membrane that form the viral replication complexes vesicules. Has a N-terminal membrane-spanning mitochondrial anchor.</text>
</comment>
<comment type="alternative products">
    <event type="alternative initiation"/>
    <isoform>
        <id>Q9IMM4-1</id>
        <name>RNA-directed RNA polymerase</name>
        <sequence type="displayed"/>
    </isoform>
    <isoform>
        <id>Q9IMM4-2</id>
        <name>B1</name>
        <sequence type="described" ref="VSP_040283"/>
    </isoform>
</comment>
<comment type="domain">
    <text evidence="1">The N-terminus is important for both membrane association and mitochondrial localization. It may also contain a RNA methyltransferase (MTase-GTase) capping domain. The C-terminus contains the RNA-dependent RNA polymerase domain and a structurally disordered region at the very end.</text>
</comment>
<comment type="miscellaneous">
    <text evidence="1">The viral bipartite genome is composed of RNA1 and RNA2.</text>
</comment>
<comment type="similarity">
    <text evidence="5">Belongs to the nodaviridae RNA polymerase family.</text>
</comment>
<dbReference type="EC" id="2.7.7.48" evidence="3"/>
<dbReference type="EMBL" id="AF174533">
    <property type="protein sequence ID" value="AAF97860.1"/>
    <property type="molecule type" value="Genomic_RNA"/>
</dbReference>
<dbReference type="RefSeq" id="NP_077730.1">
    <property type="nucleotide sequence ID" value="NC_002690.1"/>
</dbReference>
<dbReference type="SMR" id="Q9IMM4"/>
<dbReference type="GeneID" id="962117"/>
<dbReference type="KEGG" id="vg:962117"/>
<dbReference type="Proteomes" id="UP000166289">
    <property type="component" value="Genome"/>
</dbReference>
<dbReference type="GO" id="GO:0044193">
    <property type="term" value="C:host cell mitochondrial outer membrane"/>
    <property type="evidence" value="ECO:0007669"/>
    <property type="project" value="UniProtKB-SubCell"/>
</dbReference>
<dbReference type="GO" id="GO:0016020">
    <property type="term" value="C:membrane"/>
    <property type="evidence" value="ECO:0007669"/>
    <property type="project" value="UniProtKB-KW"/>
</dbReference>
<dbReference type="GO" id="GO:0000166">
    <property type="term" value="F:nucleotide binding"/>
    <property type="evidence" value="ECO:0007669"/>
    <property type="project" value="UniProtKB-KW"/>
</dbReference>
<dbReference type="GO" id="GO:0003723">
    <property type="term" value="F:RNA binding"/>
    <property type="evidence" value="ECO:0007669"/>
    <property type="project" value="InterPro"/>
</dbReference>
<dbReference type="GO" id="GO:0003968">
    <property type="term" value="F:RNA-directed RNA polymerase activity"/>
    <property type="evidence" value="ECO:0007669"/>
    <property type="project" value="UniProtKB-KW"/>
</dbReference>
<dbReference type="GO" id="GO:0006351">
    <property type="term" value="P:DNA-templated transcription"/>
    <property type="evidence" value="ECO:0007669"/>
    <property type="project" value="InterPro"/>
</dbReference>
<dbReference type="GO" id="GO:0039694">
    <property type="term" value="P:viral RNA genome replication"/>
    <property type="evidence" value="ECO:0007669"/>
    <property type="project" value="InterPro"/>
</dbReference>
<dbReference type="CDD" id="cd23173">
    <property type="entry name" value="ps-ssRNAv_Nodaviridae_RdRp"/>
    <property type="match status" value="1"/>
</dbReference>
<dbReference type="InterPro" id="IPR043502">
    <property type="entry name" value="DNA/RNA_pol_sf"/>
</dbReference>
<dbReference type="InterPro" id="IPR043647">
    <property type="entry name" value="Noda_Vmethyltr_dom"/>
</dbReference>
<dbReference type="InterPro" id="IPR001205">
    <property type="entry name" value="RNA-dir_pol_C"/>
</dbReference>
<dbReference type="InterPro" id="IPR007094">
    <property type="entry name" value="RNA-dir_pol_PSvirus"/>
</dbReference>
<dbReference type="Pfam" id="PF19222">
    <property type="entry name" value="Noda_Vmethyltr"/>
    <property type="match status" value="1"/>
</dbReference>
<dbReference type="Pfam" id="PF00680">
    <property type="entry name" value="RdRP_1"/>
    <property type="match status" value="1"/>
</dbReference>
<dbReference type="SUPFAM" id="SSF56672">
    <property type="entry name" value="DNA/RNA polymerases"/>
    <property type="match status" value="1"/>
</dbReference>
<dbReference type="PROSITE" id="PS50507">
    <property type="entry name" value="RDRP_SSRNA_POS"/>
    <property type="match status" value="1"/>
</dbReference>
<name>RDRP_NODAM</name>
<organism>
    <name type="scientific">Nodamura virus (strain Mag115)</name>
    <name type="common">NoV</name>
    <dbReference type="NCBI Taxonomy" id="914672"/>
    <lineage>
        <taxon>Viruses</taxon>
        <taxon>Riboviria</taxon>
        <taxon>Orthornavirae</taxon>
        <taxon>Kitrinoviricota</taxon>
        <taxon>Magsaviricetes</taxon>
        <taxon>Nodamuvirales</taxon>
        <taxon>Nodaviridae</taxon>
        <taxon>Alphanodavirus</taxon>
        <taxon>Nodamura virus</taxon>
    </lineage>
</organism>
<proteinExistence type="evidence at protein level"/>
<sequence>MLNYETIINGASSALNIVSRALGYRVPLAKSLALVAGSCVVYKIIVHRRTLVAFLVIGPYATVVQHRLPMALQRAIIEYTREDREISLFPQNSIVSAEHARKADNGHPISGGTRDVARETISLAIRAAGFRHYEISPARQSPAEAASHQHYAAADLVRAATEDKIQDGDVVVAIDIDYYLRDIDRYLGRGVPFMAYTFNPVEVAGRDGDSFFRITNNQVTFDVSGGGSWSHEVWDWCAFGEFIETRDASWLAWFARAVGLTKSQIHKVHYCRPWPQSPHRALVWCLPVASYWRFTFIPTDLHTRTLRRVRYQDTSRPGWNSIVSTGSEGLNISLGREGADHCVTIPKVHYDMLMGLSSAQSLSSRMIGLKYTDPSVLATVAQYYQGKNVEVADADRIGRAINPKVHWPAHVEVDEAEVSARVYASPLVSDENMMPMIKRWETLSLSLDRRVTFQRNPKVPGKRLRAYAIEFVDLVVPERGVGVPYSLEDTAAMLDKPSQTLAIQQVWETVDMPPRRLIEAFVKNEPTMKAGRIISSFADMRFLLRFSSYTLAFRDQVLHAEHNRHWFCPGLTPEQIATKVVDYVSGVEEPSEGDFSNFDGTVSEWLQRHVMNAVYLRYFNHRAQRDLRSYTDMLVSCPARAKRFGFAYDAGVGVKSGSPTTCDLNTVCNGFLQYCSIRMTHPELTPIDAFRLIGLAFGDDSLFERRFAKNYAKVSAEVGMVLKIERFDPAQGITFLARVYPDPYTSTTSFQDPLRTWRKLHLTTRDPTIPLATAAIDRVEGYLVTDGLSPLTGAYCRMVKRVYEAGGAEDAAKRRSRKSHSREKPYWLTVGGAWPQDVKDVDLMFQCAAARTGVDLETLRSLDQRLGEITDVWADITINRDNEPNPYKDTLDLEGPADGRVDDRVFQNDKHVMRLRANQVTSSQAGAAGSGDASNDPNAHDRGSQRQQGSASVLRVPDRAAPAGVSSDEQPAHQTASRSSASRGGAGPGRGGRRRPGPPAKTTAGGARDGNQARAPTSGPSKRQAEGRSRSSRGPAGSRGRGK</sequence>
<feature type="chain" id="PRO_0000222448" description="RNA-directed RNA polymerase">
    <location>
        <begin position="1"/>
        <end position="1043"/>
    </location>
</feature>
<feature type="transmembrane region" description="Helical" evidence="2">
    <location>
        <begin position="26"/>
        <end position="42"/>
    </location>
</feature>
<feature type="domain" description="RdRp catalytic" evidence="3">
    <location>
        <begin position="588"/>
        <end position="713"/>
    </location>
</feature>
<feature type="region of interest" description="Cytoplasmic" evidence="1">
    <location>
        <begin position="43"/>
        <end position="1043"/>
    </location>
</feature>
<feature type="region of interest" description="Capping" evidence="1">
    <location>
        <begin position="105"/>
        <end position="291"/>
    </location>
</feature>
<feature type="region of interest" description="Disordered" evidence="4">
    <location>
        <begin position="879"/>
        <end position="902"/>
    </location>
</feature>
<feature type="region of interest" description="Disordered" evidence="4">
    <location>
        <begin position="918"/>
        <end position="1043"/>
    </location>
</feature>
<feature type="compositionally biased region" description="Low complexity" evidence="4">
    <location>
        <begin position="922"/>
        <end position="934"/>
    </location>
</feature>
<feature type="compositionally biased region" description="Low complexity" evidence="4">
    <location>
        <begin position="1032"/>
        <end position="1043"/>
    </location>
</feature>
<feature type="active site" description="For RdRp/TNTase activity" evidence="1">
    <location>
        <position position="699"/>
    </location>
</feature>
<feature type="splice variant" id="VSP_040283" description="In isoform B1." evidence="5">
    <location>
        <begin position="1"/>
        <end position="912"/>
    </location>
</feature>
<organismHost>
    <name type="scientific">Aedes</name>
    <dbReference type="NCBI Taxonomy" id="7158"/>
</organismHost>
<organismHost>
    <name type="scientific">Lepidoptera</name>
    <name type="common">butterflies and moths</name>
    <dbReference type="NCBI Taxonomy" id="7088"/>
</organismHost>
<organismHost>
    <name type="scientific">Sus scrofa</name>
    <name type="common">Pig</name>
    <dbReference type="NCBI Taxonomy" id="9823"/>
</organismHost>